<gene>
    <name evidence="7" type="primary">BBLA</name>
    <name evidence="8" type="synonym">BBL2.1</name>
    <name type="ORF">LOC107791775</name>
</gene>
<keyword id="KW-0017">Alkaloid metabolism</keyword>
<keyword id="KW-1015">Disulfide bond</keyword>
<keyword id="KW-0274">FAD</keyword>
<keyword id="KW-0285">Flavoprotein</keyword>
<keyword id="KW-0325">Glycoprotein</keyword>
<keyword id="KW-0560">Oxidoreductase</keyword>
<keyword id="KW-1185">Reference proteome</keyword>
<keyword id="KW-0732">Signal</keyword>
<keyword id="KW-0926">Vacuole</keyword>
<reference key="1">
    <citation type="journal article" date="2011" name="Plant Physiol.">
        <title>Vacuole-localized berberine bridge enzyme-like proteins are required for a late step of nicotine biosynthesis in tobacco.</title>
        <authorList>
            <person name="Kajikawa M."/>
            <person name="Shoji T."/>
            <person name="Kato A."/>
            <person name="Hashimoto T."/>
        </authorList>
    </citation>
    <scope>NUCLEOTIDE SEQUENCE [MRNA]</scope>
    <scope>FUNCTION</scope>
    <scope>DISRUPTION PHENOTYPE</scope>
    <scope>PATHWAY</scope>
    <scope>TISSUE SPECIFICITY</scope>
    <scope>SUBCELLULAR LOCATION</scope>
    <scope>INDUCTION BY JASMONIC ACID</scope>
    <scope>COFACTOR</scope>
    <source>
        <strain>cv. Petit Havana SR1</strain>
    </source>
</reference>
<reference key="2">
    <citation type="journal article" date="2014" name="Nat. Commun.">
        <title>The tobacco genome sequence and its comparison with those of tomato and potato.</title>
        <authorList>
            <person name="Sierro N."/>
            <person name="Battey J.N."/>
            <person name="Ouadi S."/>
            <person name="Bakaher N."/>
            <person name="Bovet L."/>
            <person name="Willig A."/>
            <person name="Goepfert S."/>
            <person name="Peitsch M.C."/>
            <person name="Ivanov N.V."/>
        </authorList>
    </citation>
    <scope>NUCLEOTIDE SEQUENCE [LARGE SCALE GENOMIC DNA]</scope>
    <source>
        <strain>cv. TN90</strain>
    </source>
</reference>
<reference key="3">
    <citation type="journal article" date="2013" name="Phytochemistry">
        <title>Molecular genetics of alkaloid biosynthesis in Nicotiana tabacum.</title>
        <authorList>
            <person name="Dewey R.E."/>
            <person name="Xie J."/>
        </authorList>
    </citation>
    <scope>REVIEW ON ALKALOID BIOSYNTHESIS IN NICOTIANA TABACUM</scope>
</reference>
<reference key="4">
    <citation type="journal article" date="2015" name="Mol. Genet. Genomics">
        <title>Current status and prospects for the study of Nicotiana genomics, genetics, and nicotine biosynthesis genes.</title>
        <authorList>
            <person name="Wang X."/>
            <person name="Bennetzen J.L."/>
        </authorList>
    </citation>
    <scope>REVIEW ON NICOTINE BIOSYNTHESIS</scope>
</reference>
<protein>
    <recommendedName>
        <fullName evidence="7">Berberine bridge enzyme-like A</fullName>
        <shortName evidence="7">NtBBLa</shortName>
        <ecNumber evidence="1">1.1.1.-</ecNumber>
    </recommendedName>
</protein>
<comment type="function">
    <text evidence="6">Involved in the biosynthesis of pyridine alkaloid natural products, leading mainly to the production of anabasine, anatabine, nicotine and nornicotine, effective deterrents against herbivores with antiparasitic and pesticide properties (neurotoxins); nornicotine serves as the precursor in the synthesis of the carcinogen compound N'-nitrosonornicotine (NNN) (PubMed:21343426). Catalyzes a late oxidation step subsequent to the pyridine ring condensation reaction in the biosynthesis of alkaloids (PubMed:21343426).</text>
</comment>
<comment type="cofactor">
    <cofactor evidence="6">
        <name>FAD</name>
        <dbReference type="ChEBI" id="CHEBI:57692"/>
    </cofactor>
</comment>
<comment type="pathway">
    <text evidence="6">Alkaloid biosynthesis; nicotine biosynthesis.</text>
</comment>
<comment type="subcellular location">
    <subcellularLocation>
        <location evidence="6">Vacuole</location>
    </subcellularLocation>
</comment>
<comment type="tissue specificity">
    <text evidence="6">Mostly expressed in roots.</text>
</comment>
<comment type="induction">
    <text evidence="6">By jasmonic acid (MeJA).</text>
</comment>
<comment type="disruption phenotype">
    <text evidence="6">Strongly reduced nicotine biosynthesis but accumulation of dihydromethanicotine (PubMed:21343426). Inhibition of jasmonate-elicited formation of anatabine and other pyridine alkaloids (PubMed:21343426).</text>
</comment>
<comment type="similarity">
    <text evidence="8">Belongs to the oxygen-dependent FAD-linked oxidoreductase family.</text>
</comment>
<accession>F1T160</accession>
<dbReference type="EC" id="1.1.1.-" evidence="1"/>
<dbReference type="EMBL" id="AB604219">
    <property type="protein sequence ID" value="BAK18779.1"/>
    <property type="molecule type" value="mRNA"/>
</dbReference>
<dbReference type="RefSeq" id="NP_001312453.1">
    <property type="nucleotide sequence ID" value="NM_001325524.1"/>
</dbReference>
<dbReference type="SMR" id="F1T160"/>
<dbReference type="STRING" id="4097.F1T160"/>
<dbReference type="GlyCosmos" id="F1T160">
    <property type="glycosylation" value="5 sites, No reported glycans"/>
</dbReference>
<dbReference type="PaxDb" id="4097-F1T160"/>
<dbReference type="ProMEX" id="F1T160"/>
<dbReference type="GeneID" id="107791775"/>
<dbReference type="KEGG" id="nta:107791775"/>
<dbReference type="OMA" id="NAREMSW"/>
<dbReference type="OrthoDB" id="407275at2759"/>
<dbReference type="UniPathway" id="UPA00107"/>
<dbReference type="Proteomes" id="UP000084051">
    <property type="component" value="Unplaced"/>
</dbReference>
<dbReference type="GO" id="GO:0000325">
    <property type="term" value="C:plant-type vacuole"/>
    <property type="evidence" value="ECO:0000314"/>
    <property type="project" value="UniProtKB"/>
</dbReference>
<dbReference type="GO" id="GO:0071949">
    <property type="term" value="F:FAD binding"/>
    <property type="evidence" value="ECO:0007669"/>
    <property type="project" value="InterPro"/>
</dbReference>
<dbReference type="GO" id="GO:0016491">
    <property type="term" value="F:oxidoreductase activity"/>
    <property type="evidence" value="ECO:0007669"/>
    <property type="project" value="UniProtKB-KW"/>
</dbReference>
<dbReference type="GO" id="GO:0009821">
    <property type="term" value="P:alkaloid biosynthetic process"/>
    <property type="evidence" value="ECO:0000315"/>
    <property type="project" value="UniProtKB"/>
</dbReference>
<dbReference type="GO" id="GO:0042179">
    <property type="term" value="P:nicotine biosynthetic process"/>
    <property type="evidence" value="ECO:0000315"/>
    <property type="project" value="UniProtKB"/>
</dbReference>
<dbReference type="GO" id="GO:0009753">
    <property type="term" value="P:response to jasmonic acid"/>
    <property type="evidence" value="ECO:0000315"/>
    <property type="project" value="UniProtKB"/>
</dbReference>
<dbReference type="Gene3D" id="3.30.465.10">
    <property type="match status" value="1"/>
</dbReference>
<dbReference type="Gene3D" id="3.40.462.20">
    <property type="match status" value="1"/>
</dbReference>
<dbReference type="Gene3D" id="3.30.43.10">
    <property type="entry name" value="Uridine Diphospho-n-acetylenolpyruvylglucosamine Reductase, domain 2"/>
    <property type="match status" value="1"/>
</dbReference>
<dbReference type="InterPro" id="IPR012951">
    <property type="entry name" value="BBE"/>
</dbReference>
<dbReference type="InterPro" id="IPR016166">
    <property type="entry name" value="FAD-bd_PCMH"/>
</dbReference>
<dbReference type="InterPro" id="IPR036318">
    <property type="entry name" value="FAD-bd_PCMH-like_sf"/>
</dbReference>
<dbReference type="InterPro" id="IPR016167">
    <property type="entry name" value="FAD-bd_PCMH_sub1"/>
</dbReference>
<dbReference type="InterPro" id="IPR016169">
    <property type="entry name" value="FAD-bd_PCMH_sub2"/>
</dbReference>
<dbReference type="InterPro" id="IPR006094">
    <property type="entry name" value="Oxid_FAD_bind_N"/>
</dbReference>
<dbReference type="PANTHER" id="PTHR32448">
    <property type="entry name" value="OS08G0158400 PROTEIN"/>
    <property type="match status" value="1"/>
</dbReference>
<dbReference type="Pfam" id="PF08031">
    <property type="entry name" value="BBE"/>
    <property type="match status" value="1"/>
</dbReference>
<dbReference type="Pfam" id="PF01565">
    <property type="entry name" value="FAD_binding_4"/>
    <property type="match status" value="1"/>
</dbReference>
<dbReference type="SUPFAM" id="SSF56176">
    <property type="entry name" value="FAD-binding/transporter-associated domain-like"/>
    <property type="match status" value="1"/>
</dbReference>
<dbReference type="PROSITE" id="PS51387">
    <property type="entry name" value="FAD_PCMH"/>
    <property type="match status" value="1"/>
</dbReference>
<evidence type="ECO:0000250" key="1">
    <source>
        <dbReference type="UniProtKB" id="O64743"/>
    </source>
</evidence>
<evidence type="ECO:0000250" key="2">
    <source>
        <dbReference type="UniProtKB" id="Q9FI21"/>
    </source>
</evidence>
<evidence type="ECO:0000255" key="3"/>
<evidence type="ECO:0000255" key="4">
    <source>
        <dbReference type="PROSITE-ProRule" id="PRU00498"/>
    </source>
</evidence>
<evidence type="ECO:0000255" key="5">
    <source>
        <dbReference type="PROSITE-ProRule" id="PRU00718"/>
    </source>
</evidence>
<evidence type="ECO:0000269" key="6">
    <source>
    </source>
</evidence>
<evidence type="ECO:0000303" key="7">
    <source>
    </source>
</evidence>
<evidence type="ECO:0000305" key="8"/>
<organism>
    <name type="scientific">Nicotiana tabacum</name>
    <name type="common">Common tobacco</name>
    <dbReference type="NCBI Taxonomy" id="4097"/>
    <lineage>
        <taxon>Eukaryota</taxon>
        <taxon>Viridiplantae</taxon>
        <taxon>Streptophyta</taxon>
        <taxon>Embryophyta</taxon>
        <taxon>Tracheophyta</taxon>
        <taxon>Spermatophyta</taxon>
        <taxon>Magnoliopsida</taxon>
        <taxon>eudicotyledons</taxon>
        <taxon>Gunneridae</taxon>
        <taxon>Pentapetalae</taxon>
        <taxon>asterids</taxon>
        <taxon>lamiids</taxon>
        <taxon>Solanales</taxon>
        <taxon>Solanaceae</taxon>
        <taxon>Nicotianoideae</taxon>
        <taxon>Nicotianeae</taxon>
        <taxon>Nicotiana</taxon>
    </lineage>
</organism>
<proteinExistence type="evidence at transcript level"/>
<sequence length="559" mass="62194">MFPLIILISFSLASLSETATGAVTNLSACLINHNVHNFSIYPTSRNYFNLLHFSLQNLRFAAPFMPKPTFIILPSSKEELVSTIFCCRKASYEIRVRCGGHSYEGTSYVSFDASPFVIVDLMKLDDVSVDLDSETAWAQGGATIGQIYYAIAKVSDVHAFSAGSGPTVGSGGHISGGGFGLLSRKFGLAADNVVDALLIDADGRLLDRKAMGEDVFWAIRGGGGGNWGIVYAWKIRLLKVPKIVTTCMIYRPGSKQYVAQILEKWQIVTPNLVDDFTLGVLLRPADLPADMKYGNTTPIEIFPQFNALYLGPKTEVLSISNETFPELGVKNDECKEMTWVESALFFSELADVNGNSTGDISRLKERYMDGKGFFKGKTDYVKKPVSMDGMLTFLVELEKNPKGYLVFDPYGGAMDKISDQAIAFPHRKGNLFAIQYLAQWNEEDDYMSDVYMEWIRGFYNTMTPFVSSSPRGAYINYLDMDLGVNMVDDYLLRNASSSSPSSSVDAVERARAWGEMYFLHNYDRLVKAKTQIDPLNVFRHEQSIPPMLGSTQEHKYSSE</sequence>
<feature type="signal peptide" evidence="3">
    <location>
        <begin position="1"/>
        <end position="21"/>
    </location>
</feature>
<feature type="chain" id="PRO_5015090528" description="Berberine bridge enzyme-like A">
    <location>
        <begin position="22"/>
        <end position="559"/>
    </location>
</feature>
<feature type="domain" description="FAD-binding PCMH-type" evidence="5">
    <location>
        <begin position="64"/>
        <end position="240"/>
    </location>
</feature>
<feature type="modified residue" description="Pros-8alpha-FAD histidine" evidence="2">
    <location>
        <position position="101"/>
    </location>
</feature>
<feature type="glycosylation site" description="N-linked (GlcNAc...) asparagine" evidence="4">
    <location>
        <position position="25"/>
    </location>
</feature>
<feature type="glycosylation site" description="N-linked (GlcNAc...) asparagine" evidence="4">
    <location>
        <position position="37"/>
    </location>
</feature>
<feature type="glycosylation site" description="N-linked (GlcNAc...) asparagine" evidence="4">
    <location>
        <position position="321"/>
    </location>
</feature>
<feature type="glycosylation site" description="N-linked (GlcNAc...) asparagine" evidence="4">
    <location>
        <position position="355"/>
    </location>
</feature>
<feature type="glycosylation site" description="N-linked (GlcNAc...) asparagine" evidence="4">
    <location>
        <position position="494"/>
    </location>
</feature>
<feature type="disulfide bond" evidence="1">
    <location>
        <begin position="29"/>
        <end position="86"/>
    </location>
</feature>
<name>BBLA_TOBAC</name>